<reference key="1">
    <citation type="journal article" date="1998" name="Nature">
        <title>Deciphering the biology of Mycobacterium tuberculosis from the complete genome sequence.</title>
        <authorList>
            <person name="Cole S.T."/>
            <person name="Brosch R."/>
            <person name="Parkhill J."/>
            <person name="Garnier T."/>
            <person name="Churcher C.M."/>
            <person name="Harris D.E."/>
            <person name="Gordon S.V."/>
            <person name="Eiglmeier K."/>
            <person name="Gas S."/>
            <person name="Barry C.E. III"/>
            <person name="Tekaia F."/>
            <person name="Badcock K."/>
            <person name="Basham D."/>
            <person name="Brown D."/>
            <person name="Chillingworth T."/>
            <person name="Connor R."/>
            <person name="Davies R.M."/>
            <person name="Devlin K."/>
            <person name="Feltwell T."/>
            <person name="Gentles S."/>
            <person name="Hamlin N."/>
            <person name="Holroyd S."/>
            <person name="Hornsby T."/>
            <person name="Jagels K."/>
            <person name="Krogh A."/>
            <person name="McLean J."/>
            <person name="Moule S."/>
            <person name="Murphy L.D."/>
            <person name="Oliver S."/>
            <person name="Osborne J."/>
            <person name="Quail M.A."/>
            <person name="Rajandream M.A."/>
            <person name="Rogers J."/>
            <person name="Rutter S."/>
            <person name="Seeger K."/>
            <person name="Skelton S."/>
            <person name="Squares S."/>
            <person name="Squares R."/>
            <person name="Sulston J.E."/>
            <person name="Taylor K."/>
            <person name="Whitehead S."/>
            <person name="Barrell B.G."/>
        </authorList>
    </citation>
    <scope>NUCLEOTIDE SEQUENCE [LARGE SCALE GENOMIC DNA]</scope>
    <source>
        <strain>ATCC 25618 / H37Rv</strain>
    </source>
</reference>
<reference key="2">
    <citation type="journal article" date="2005" name="Nucleic Acids Res.">
        <title>Toxin-antitoxin loci are highly abundant in free-living but lost from host-associated prokaryotes.</title>
        <authorList>
            <person name="Pandey D.P."/>
            <person name="Gerdes K."/>
        </authorList>
    </citation>
    <scope>IDENTIFICATION</scope>
    <scope>POSSIBLE FUNCTION</scope>
    <source>
        <strain>ATCC 25618 / H37Rv</strain>
    </source>
</reference>
<keyword id="KW-1185">Reference proteome</keyword>
<keyword id="KW-1277">Toxin-antitoxin system</keyword>
<organism>
    <name type="scientific">Mycobacterium tuberculosis (strain ATCC 25618 / H37Rv)</name>
    <dbReference type="NCBI Taxonomy" id="83332"/>
    <lineage>
        <taxon>Bacteria</taxon>
        <taxon>Bacillati</taxon>
        <taxon>Actinomycetota</taxon>
        <taxon>Actinomycetes</taxon>
        <taxon>Mycobacteriales</taxon>
        <taxon>Mycobacteriaceae</taxon>
        <taxon>Mycobacterium</taxon>
        <taxon>Mycobacterium tuberculosis complex</taxon>
    </lineage>
</organism>
<accession>P0CW29</accession>
<accession>L0T5E8</accession>
<dbReference type="EMBL" id="AL123456">
    <property type="protein sequence ID" value="CCP42787.1"/>
    <property type="molecule type" value="Genomic_DNA"/>
</dbReference>
<dbReference type="RefSeq" id="WP_003400577.1">
    <property type="nucleotide sequence ID" value="NZ_NVQJ01000005.1"/>
</dbReference>
<dbReference type="RefSeq" id="YP_007408701.1">
    <property type="nucleotide sequence ID" value="NC_000962.3"/>
</dbReference>
<dbReference type="SMR" id="P0CW29"/>
<dbReference type="STRING" id="83332.Rv0064A"/>
<dbReference type="PaxDb" id="83332-Rv0064A"/>
<dbReference type="GeneID" id="14515844"/>
<dbReference type="KEGG" id="mtu:Rv0064A"/>
<dbReference type="KEGG" id="mtv:RVBD_0064A"/>
<dbReference type="TubercuList" id="Rv0064A"/>
<dbReference type="eggNOG" id="ENOG502ZQU1">
    <property type="taxonomic scope" value="Bacteria"/>
</dbReference>
<dbReference type="InParanoid" id="P0CW29"/>
<dbReference type="OrthoDB" id="7107936at2"/>
<dbReference type="Proteomes" id="UP000001584">
    <property type="component" value="Chromosome"/>
</dbReference>
<dbReference type="GO" id="GO:0006355">
    <property type="term" value="P:regulation of DNA-templated transcription"/>
    <property type="evidence" value="ECO:0007669"/>
    <property type="project" value="InterPro"/>
</dbReference>
<dbReference type="InterPro" id="IPR053853">
    <property type="entry name" value="FitA-like_RHH"/>
</dbReference>
<dbReference type="InterPro" id="IPR010985">
    <property type="entry name" value="Ribbon_hlx_hlx"/>
</dbReference>
<dbReference type="Pfam" id="PF22513">
    <property type="entry name" value="FitA-like_RHH"/>
    <property type="match status" value="1"/>
</dbReference>
<dbReference type="SUPFAM" id="SSF47598">
    <property type="entry name" value="Ribbon-helix-helix"/>
    <property type="match status" value="1"/>
</dbReference>
<gene>
    <name type="primary">vapB1</name>
    <name type="ordered locus">Rv0064A</name>
</gene>
<protein>
    <recommendedName>
        <fullName>Putative antitoxin VapB1</fullName>
    </recommendedName>
</protein>
<feature type="chain" id="PRO_0000408051" description="Putative antitoxin VapB1">
    <location>
        <begin position="1"/>
        <end position="79"/>
    </location>
</feature>
<sequence length="79" mass="8718">MATIQVRDLPEDVAETYRRRATAAGQSLQTYMRTKLIEGVRGRDKAEAIEILEQALASTASPGISRETIEASRRELRGG</sequence>
<comment type="function">
    <text evidence="1">Antitoxin component of a possible type II toxin-antitoxin (TA) system. The cognate toxin is VapC1.</text>
</comment>
<proteinExistence type="predicted"/>
<evidence type="ECO:0000305" key="1">
    <source>
    </source>
</evidence>
<name>VAPB1_MYCTU</name>